<gene>
    <name type="ordered locus">BMEA_A1459</name>
</gene>
<accession>C0RE50</accession>
<evidence type="ECO:0000255" key="1">
    <source>
        <dbReference type="HAMAP-Rule" id="MF_00761"/>
    </source>
</evidence>
<comment type="similarity">
    <text evidence="1">Belongs to the UPF0303 family.</text>
</comment>
<dbReference type="EMBL" id="CP001488">
    <property type="protein sequence ID" value="ACO01172.1"/>
    <property type="molecule type" value="Genomic_DNA"/>
</dbReference>
<dbReference type="RefSeq" id="WP_002964519.1">
    <property type="nucleotide sequence ID" value="NC_012441.1"/>
</dbReference>
<dbReference type="SMR" id="C0RE50"/>
<dbReference type="KEGG" id="bmi:BMEA_A1459"/>
<dbReference type="HOGENOM" id="CLU_101036_2_2_5"/>
<dbReference type="Proteomes" id="UP000001748">
    <property type="component" value="Chromosome I"/>
</dbReference>
<dbReference type="Gene3D" id="3.30.450.150">
    <property type="entry name" value="Haem-degrading domain"/>
    <property type="match status" value="1"/>
</dbReference>
<dbReference type="HAMAP" id="MF_00761">
    <property type="entry name" value="UPF0303"/>
    <property type="match status" value="1"/>
</dbReference>
<dbReference type="InterPro" id="IPR005624">
    <property type="entry name" value="PduO/GlcC-like"/>
</dbReference>
<dbReference type="InterPro" id="IPR038084">
    <property type="entry name" value="PduO/GlcC-like_sf"/>
</dbReference>
<dbReference type="InterPro" id="IPR010371">
    <property type="entry name" value="YBR137W-like"/>
</dbReference>
<dbReference type="NCBIfam" id="NF002693">
    <property type="entry name" value="PRK02487.1-2"/>
    <property type="match status" value="1"/>
</dbReference>
<dbReference type="NCBIfam" id="NF002696">
    <property type="entry name" value="PRK02487.1-5"/>
    <property type="match status" value="1"/>
</dbReference>
<dbReference type="PANTHER" id="PTHR28255">
    <property type="match status" value="1"/>
</dbReference>
<dbReference type="PANTHER" id="PTHR28255:SF1">
    <property type="entry name" value="UPF0303 PROTEIN YBR137W"/>
    <property type="match status" value="1"/>
</dbReference>
<dbReference type="Pfam" id="PF03928">
    <property type="entry name" value="HbpS-like"/>
    <property type="match status" value="1"/>
</dbReference>
<dbReference type="PIRSF" id="PIRSF008757">
    <property type="entry name" value="UCP008757"/>
    <property type="match status" value="1"/>
</dbReference>
<dbReference type="SUPFAM" id="SSF143744">
    <property type="entry name" value="GlcG-like"/>
    <property type="match status" value="1"/>
</dbReference>
<feature type="chain" id="PRO_1000148416" description="UPF0303 protein BMEA_A1459">
    <location>
        <begin position="1"/>
        <end position="169"/>
    </location>
</feature>
<protein>
    <recommendedName>
        <fullName evidence="1">UPF0303 protein BMEA_A1459</fullName>
    </recommendedName>
</protein>
<name>Y1459_BRUMB</name>
<proteinExistence type="inferred from homology"/>
<organism>
    <name type="scientific">Brucella melitensis biotype 2 (strain ATCC 23457)</name>
    <dbReference type="NCBI Taxonomy" id="546272"/>
    <lineage>
        <taxon>Bacteria</taxon>
        <taxon>Pseudomonadati</taxon>
        <taxon>Pseudomonadota</taxon>
        <taxon>Alphaproteobacteria</taxon>
        <taxon>Hyphomicrobiales</taxon>
        <taxon>Brucellaceae</taxon>
        <taxon>Brucella/Ochrobactrum group</taxon>
        <taxon>Brucella</taxon>
    </lineage>
</organism>
<reference key="1">
    <citation type="submission" date="2009-03" db="EMBL/GenBank/DDBJ databases">
        <title>Brucella melitensis ATCC 23457 whole genome shotgun sequencing project.</title>
        <authorList>
            <person name="Setubal J.C."/>
            <person name="Boyle S."/>
            <person name="Crasta O.R."/>
            <person name="Gillespie J.J."/>
            <person name="Kenyon R.W."/>
            <person name="Lu J."/>
            <person name="Mane S."/>
            <person name="Nagrani S."/>
            <person name="Shallom J.M."/>
            <person name="Shallom S."/>
            <person name="Shukla M."/>
            <person name="Snyder E.E."/>
            <person name="Sobral B.W."/>
            <person name="Wattam A.R."/>
            <person name="Will R."/>
            <person name="Williams K."/>
            <person name="Yoo H."/>
            <person name="Munk C."/>
            <person name="Tapia R."/>
            <person name="Han C."/>
            <person name="Detter J.C."/>
            <person name="Bruce D."/>
            <person name="Brettin T.S."/>
        </authorList>
    </citation>
    <scope>NUCLEOTIDE SEQUENCE [LARGE SCALE GENOMIC DNA]</scope>
    <source>
        <strain>ATCC 23457</strain>
    </source>
</reference>
<sequence length="169" mass="18567">MAQGDDNKQAIGQIIRQEQALIFPSLDENDAFSLGQRIRDIAVKDKLGIAIDISLWDRRLFFAATAGATADNTEWLRRKFNVVRRFHVSTYRLVLEQNREDRMFAPYKALDVADYALAGGGFPIRVSGAGVIGAVIVSGLPQREDHNLVVRAVAEHVGQDPVALALPAA</sequence>